<keyword id="KW-0004">4Fe-4S</keyword>
<keyword id="KW-0150">Chloroplast</keyword>
<keyword id="KW-0408">Iron</keyword>
<keyword id="KW-0411">Iron-sulfur</keyword>
<keyword id="KW-0472">Membrane</keyword>
<keyword id="KW-0479">Metal-binding</keyword>
<keyword id="KW-0520">NAD</keyword>
<keyword id="KW-0521">NADP</keyword>
<keyword id="KW-0934">Plastid</keyword>
<keyword id="KW-0618">Plastoquinone</keyword>
<keyword id="KW-0874">Quinone</keyword>
<keyword id="KW-1185">Reference proteome</keyword>
<keyword id="KW-0793">Thylakoid</keyword>
<keyword id="KW-1278">Translocase</keyword>
<keyword id="KW-0813">Transport</keyword>
<name>NDHK_GOSHI</name>
<dbReference type="EC" id="7.1.1.-" evidence="1"/>
<dbReference type="EMBL" id="DQ345959">
    <property type="protein sequence ID" value="ABC73631.1"/>
    <property type="molecule type" value="Genomic_DNA"/>
</dbReference>
<dbReference type="RefSeq" id="YP_538939.1">
    <property type="nucleotide sequence ID" value="NC_007944.1"/>
</dbReference>
<dbReference type="SMR" id="Q2L909"/>
<dbReference type="GeneID" id="3989149"/>
<dbReference type="KEGG" id="ghi:3989149"/>
<dbReference type="OrthoDB" id="4763at41938"/>
<dbReference type="Proteomes" id="UP000189702">
    <property type="component" value="Chloroplast Pltd"/>
</dbReference>
<dbReference type="GO" id="GO:0009535">
    <property type="term" value="C:chloroplast thylakoid membrane"/>
    <property type="evidence" value="ECO:0007669"/>
    <property type="project" value="UniProtKB-SubCell"/>
</dbReference>
<dbReference type="GO" id="GO:0045271">
    <property type="term" value="C:respiratory chain complex I"/>
    <property type="evidence" value="ECO:0000318"/>
    <property type="project" value="GO_Central"/>
</dbReference>
<dbReference type="GO" id="GO:0051539">
    <property type="term" value="F:4 iron, 4 sulfur cluster binding"/>
    <property type="evidence" value="ECO:0007669"/>
    <property type="project" value="UniProtKB-KW"/>
</dbReference>
<dbReference type="GO" id="GO:0005506">
    <property type="term" value="F:iron ion binding"/>
    <property type="evidence" value="ECO:0007669"/>
    <property type="project" value="UniProtKB-UniRule"/>
</dbReference>
<dbReference type="GO" id="GO:0008137">
    <property type="term" value="F:NADH dehydrogenase (ubiquinone) activity"/>
    <property type="evidence" value="ECO:0000318"/>
    <property type="project" value="GO_Central"/>
</dbReference>
<dbReference type="GO" id="GO:0048038">
    <property type="term" value="F:quinone binding"/>
    <property type="evidence" value="ECO:0007669"/>
    <property type="project" value="UniProtKB-KW"/>
</dbReference>
<dbReference type="GO" id="GO:0009060">
    <property type="term" value="P:aerobic respiration"/>
    <property type="evidence" value="ECO:0000318"/>
    <property type="project" value="GO_Central"/>
</dbReference>
<dbReference type="GO" id="GO:0015990">
    <property type="term" value="P:electron transport coupled proton transport"/>
    <property type="evidence" value="ECO:0000318"/>
    <property type="project" value="GO_Central"/>
</dbReference>
<dbReference type="GO" id="GO:0019684">
    <property type="term" value="P:photosynthesis, light reaction"/>
    <property type="evidence" value="ECO:0007669"/>
    <property type="project" value="UniProtKB-UniRule"/>
</dbReference>
<dbReference type="FunFam" id="3.40.50.12280:FF:000003">
    <property type="entry name" value="NAD(P)H-quinone oxidoreductase subunit K, chloroplastic"/>
    <property type="match status" value="1"/>
</dbReference>
<dbReference type="Gene3D" id="3.40.50.12280">
    <property type="match status" value="1"/>
</dbReference>
<dbReference type="HAMAP" id="MF_01356">
    <property type="entry name" value="NDH1_NuoB"/>
    <property type="match status" value="1"/>
</dbReference>
<dbReference type="InterPro" id="IPR006137">
    <property type="entry name" value="NADH_UbQ_OxRdtase-like_20kDa"/>
</dbReference>
<dbReference type="InterPro" id="IPR006138">
    <property type="entry name" value="NADH_UQ_OxRdtase_20Kd_su"/>
</dbReference>
<dbReference type="NCBIfam" id="TIGR01957">
    <property type="entry name" value="nuoB_fam"/>
    <property type="match status" value="1"/>
</dbReference>
<dbReference type="NCBIfam" id="NF005012">
    <property type="entry name" value="PRK06411.1"/>
    <property type="match status" value="1"/>
</dbReference>
<dbReference type="PANTHER" id="PTHR11995">
    <property type="entry name" value="NADH DEHYDROGENASE"/>
    <property type="match status" value="1"/>
</dbReference>
<dbReference type="PANTHER" id="PTHR11995:SF14">
    <property type="entry name" value="NADH DEHYDROGENASE [UBIQUINONE] IRON-SULFUR PROTEIN 7, MITOCHONDRIAL"/>
    <property type="match status" value="1"/>
</dbReference>
<dbReference type="Pfam" id="PF01058">
    <property type="entry name" value="Oxidored_q6"/>
    <property type="match status" value="1"/>
</dbReference>
<dbReference type="SUPFAM" id="SSF56770">
    <property type="entry name" value="HydA/Nqo6-like"/>
    <property type="match status" value="1"/>
</dbReference>
<dbReference type="PROSITE" id="PS01150">
    <property type="entry name" value="COMPLEX1_20K"/>
    <property type="match status" value="1"/>
</dbReference>
<comment type="function">
    <text evidence="1">NDH shuttles electrons from NAD(P)H:plastoquinone, via FMN and iron-sulfur (Fe-S) centers, to quinones in the photosynthetic chain and possibly in a chloroplast respiratory chain. The immediate electron acceptor for the enzyme in this species is believed to be plastoquinone. Couples the redox reaction to proton translocation, and thus conserves the redox energy in a proton gradient.</text>
</comment>
<comment type="catalytic activity">
    <reaction evidence="1">
        <text>a plastoquinone + NADH + (n+1) H(+)(in) = a plastoquinol + NAD(+) + n H(+)(out)</text>
        <dbReference type="Rhea" id="RHEA:42608"/>
        <dbReference type="Rhea" id="RHEA-COMP:9561"/>
        <dbReference type="Rhea" id="RHEA-COMP:9562"/>
        <dbReference type="ChEBI" id="CHEBI:15378"/>
        <dbReference type="ChEBI" id="CHEBI:17757"/>
        <dbReference type="ChEBI" id="CHEBI:57540"/>
        <dbReference type="ChEBI" id="CHEBI:57945"/>
        <dbReference type="ChEBI" id="CHEBI:62192"/>
    </reaction>
</comment>
<comment type="catalytic activity">
    <reaction evidence="1">
        <text>a plastoquinone + NADPH + (n+1) H(+)(in) = a plastoquinol + NADP(+) + n H(+)(out)</text>
        <dbReference type="Rhea" id="RHEA:42612"/>
        <dbReference type="Rhea" id="RHEA-COMP:9561"/>
        <dbReference type="Rhea" id="RHEA-COMP:9562"/>
        <dbReference type="ChEBI" id="CHEBI:15378"/>
        <dbReference type="ChEBI" id="CHEBI:17757"/>
        <dbReference type="ChEBI" id="CHEBI:57783"/>
        <dbReference type="ChEBI" id="CHEBI:58349"/>
        <dbReference type="ChEBI" id="CHEBI:62192"/>
    </reaction>
</comment>
<comment type="cofactor">
    <cofactor evidence="1">
        <name>[4Fe-4S] cluster</name>
        <dbReference type="ChEBI" id="CHEBI:49883"/>
    </cofactor>
    <text evidence="1">Binds 1 [4Fe-4S] cluster.</text>
</comment>
<comment type="subunit">
    <text evidence="1">NDH is composed of at least 16 different subunits, 5 of which are encoded in the nucleus.</text>
</comment>
<comment type="subcellular location">
    <subcellularLocation>
        <location evidence="1">Plastid</location>
        <location evidence="1">Chloroplast thylakoid membrane</location>
        <topology evidence="1">Peripheral membrane protein</topology>
        <orientation evidence="1">Stromal side</orientation>
    </subcellularLocation>
</comment>
<comment type="similarity">
    <text evidence="1">Belongs to the complex I 20 kDa subunit family.</text>
</comment>
<evidence type="ECO:0000255" key="1">
    <source>
        <dbReference type="HAMAP-Rule" id="MF_01356"/>
    </source>
</evidence>
<accession>Q2L909</accession>
<proteinExistence type="inferred from homology"/>
<gene>
    <name evidence="1" type="primary">ndhK</name>
</gene>
<feature type="chain" id="PRO_0000358546" description="NAD(P)H-quinone oxidoreductase subunit K, chloroplastic">
    <location>
        <begin position="1"/>
        <end position="225"/>
    </location>
</feature>
<feature type="binding site" evidence="1">
    <location>
        <position position="43"/>
    </location>
    <ligand>
        <name>[4Fe-4S] cluster</name>
        <dbReference type="ChEBI" id="CHEBI:49883"/>
    </ligand>
</feature>
<feature type="binding site" evidence="1">
    <location>
        <position position="44"/>
    </location>
    <ligand>
        <name>[4Fe-4S] cluster</name>
        <dbReference type="ChEBI" id="CHEBI:49883"/>
    </ligand>
</feature>
<feature type="binding site" evidence="1">
    <location>
        <position position="108"/>
    </location>
    <ligand>
        <name>[4Fe-4S] cluster</name>
        <dbReference type="ChEBI" id="CHEBI:49883"/>
    </ligand>
</feature>
<feature type="binding site" evidence="1">
    <location>
        <position position="139"/>
    </location>
    <ligand>
        <name>[4Fe-4S] cluster</name>
        <dbReference type="ChEBI" id="CHEBI:49883"/>
    </ligand>
</feature>
<sequence length="225" mass="25290">MNSIEFPLLDRTTQNSVISTTLNDLSNWSRLSSLWPLLYGTSCCFIEFASLIGSRFDFDRYGLVPRSSPRQADLILTAGTVTMKMAPSLVRLYEQMPEPKYVIAMGACTITGGMFSTDSYSTVRGVDKLIPVDVYLPGCPPKPEAVIDAITKLRKKISREIYEDRIRSQQGDRCFTTNHKFCLVRSTRTGNYNQGLLYQPPSTSEIPPETFFNYKGSLSSHELVN</sequence>
<geneLocation type="chloroplast"/>
<reference key="1">
    <citation type="journal article" date="2006" name="BMC Genomics">
        <title>The complete chloroplast genome sequence of Gossypium hirsutum: organization and phylogenetic relationships to other angiosperms.</title>
        <authorList>
            <person name="Lee S.-B."/>
            <person name="Kaittanis C."/>
            <person name="Jansen R.K."/>
            <person name="Hostetler J.B."/>
            <person name="Tallon L.J."/>
            <person name="Town C.D."/>
            <person name="Daniell H."/>
        </authorList>
    </citation>
    <scope>NUCLEOTIDE SEQUENCE [LARGE SCALE GENOMIC DNA]</scope>
    <source>
        <strain>cv. Coker 310FR</strain>
    </source>
</reference>
<protein>
    <recommendedName>
        <fullName evidence="1">NAD(P)H-quinone oxidoreductase subunit K, chloroplastic</fullName>
        <ecNumber evidence="1">7.1.1.-</ecNumber>
    </recommendedName>
    <alternativeName>
        <fullName evidence="1">NAD(P)H dehydrogenase subunit K</fullName>
    </alternativeName>
    <alternativeName>
        <fullName evidence="1">NADH-plastoquinone oxidoreductase subunit K</fullName>
    </alternativeName>
</protein>
<organism>
    <name type="scientific">Gossypium hirsutum</name>
    <name type="common">Upland cotton</name>
    <name type="synonym">Gossypium mexicanum</name>
    <dbReference type="NCBI Taxonomy" id="3635"/>
    <lineage>
        <taxon>Eukaryota</taxon>
        <taxon>Viridiplantae</taxon>
        <taxon>Streptophyta</taxon>
        <taxon>Embryophyta</taxon>
        <taxon>Tracheophyta</taxon>
        <taxon>Spermatophyta</taxon>
        <taxon>Magnoliopsida</taxon>
        <taxon>eudicotyledons</taxon>
        <taxon>Gunneridae</taxon>
        <taxon>Pentapetalae</taxon>
        <taxon>rosids</taxon>
        <taxon>malvids</taxon>
        <taxon>Malvales</taxon>
        <taxon>Malvaceae</taxon>
        <taxon>Malvoideae</taxon>
        <taxon>Gossypium</taxon>
    </lineage>
</organism>